<organism>
    <name type="scientific">Aspergillus fumigatus (strain CBS 144.89 / FGSC A1163 / CEA10)</name>
    <name type="common">Neosartorya fumigata</name>
    <dbReference type="NCBI Taxonomy" id="451804"/>
    <lineage>
        <taxon>Eukaryota</taxon>
        <taxon>Fungi</taxon>
        <taxon>Dikarya</taxon>
        <taxon>Ascomycota</taxon>
        <taxon>Pezizomycotina</taxon>
        <taxon>Eurotiomycetes</taxon>
        <taxon>Eurotiomycetidae</taxon>
        <taxon>Eurotiales</taxon>
        <taxon>Aspergillaceae</taxon>
        <taxon>Aspergillus</taxon>
        <taxon>Aspergillus subgen. Fumigati</taxon>
    </lineage>
</organism>
<gene>
    <name type="ORF">AFUB_079000</name>
</gene>
<accession>B0Y8Y6</accession>
<reference key="1">
    <citation type="journal article" date="2008" name="PLoS Genet.">
        <title>Genomic islands in the pathogenic filamentous fungus Aspergillus fumigatus.</title>
        <authorList>
            <person name="Fedorova N.D."/>
            <person name="Khaldi N."/>
            <person name="Joardar V.S."/>
            <person name="Maiti R."/>
            <person name="Amedeo P."/>
            <person name="Anderson M.J."/>
            <person name="Crabtree J."/>
            <person name="Silva J.C."/>
            <person name="Badger J.H."/>
            <person name="Albarraq A."/>
            <person name="Angiuoli S."/>
            <person name="Bussey H."/>
            <person name="Bowyer P."/>
            <person name="Cotty P.J."/>
            <person name="Dyer P.S."/>
            <person name="Egan A."/>
            <person name="Galens K."/>
            <person name="Fraser-Liggett C.M."/>
            <person name="Haas B.J."/>
            <person name="Inman J.M."/>
            <person name="Kent R."/>
            <person name="Lemieux S."/>
            <person name="Malavazi I."/>
            <person name="Orvis J."/>
            <person name="Roemer T."/>
            <person name="Ronning C.M."/>
            <person name="Sundaram J.P."/>
            <person name="Sutton G."/>
            <person name="Turner G."/>
            <person name="Venter J.C."/>
            <person name="White O.R."/>
            <person name="Whitty B.R."/>
            <person name="Youngman P."/>
            <person name="Wolfe K.H."/>
            <person name="Goldman G.H."/>
            <person name="Wortman J.R."/>
            <person name="Jiang B."/>
            <person name="Denning D.W."/>
            <person name="Nierman W.C."/>
        </authorList>
    </citation>
    <scope>NUCLEOTIDE SEQUENCE [LARGE SCALE GENOMIC DNA]</scope>
    <source>
        <strain>CBS 144.89 / FGSC A1163 / CEA10</strain>
    </source>
</reference>
<reference key="2">
    <citation type="journal article" date="2019" name="Nat. Microbiol.">
        <title>Fungal biofilm morphology impacts hypoxia fitness and disease progression.</title>
        <authorList>
            <person name="Kowalski C.H."/>
            <person name="Kerkaert J.D."/>
            <person name="Liu K.W."/>
            <person name="Bond M.C."/>
            <person name="Hartmann R."/>
            <person name="Nadell C.D."/>
            <person name="Stajich J.E."/>
            <person name="Cramer R.A."/>
        </authorList>
    </citation>
    <scope>FUNCTION</scope>
    <scope>INDUCTION</scope>
</reference>
<protein>
    <recommendedName>
        <fullName evidence="2">Subtelomeric hrmA-associated cluster protein AFUB_079000</fullName>
    </recommendedName>
</protein>
<proteinExistence type="evidence at transcript level"/>
<dbReference type="EMBL" id="DS499599">
    <property type="protein sequence ID" value="EDP49867.1"/>
    <property type="molecule type" value="Genomic_DNA"/>
</dbReference>
<dbReference type="EnsemblFungi" id="EDP49867">
    <property type="protein sequence ID" value="EDP49867"/>
    <property type="gene ID" value="AFUB_079000"/>
</dbReference>
<dbReference type="VEuPathDB" id="FungiDB:AFUB_079000"/>
<dbReference type="HOGENOM" id="CLU_1916590_0_0_1"/>
<dbReference type="OrthoDB" id="57453at5052"/>
<dbReference type="Proteomes" id="UP000001699">
    <property type="component" value="Unassembled WGS sequence"/>
</dbReference>
<dbReference type="GO" id="GO:0007155">
    <property type="term" value="P:cell adhesion"/>
    <property type="evidence" value="ECO:0007669"/>
    <property type="project" value="UniProtKB-KW"/>
</dbReference>
<comment type="function">
    <text evidence="1">Part of the subtelomeric hrmA-associated cluster (HAC) containing genes that alter the hyphal surface (such as reduced total chitin or increased beta-glucan exposure) and perturb inter-hyphal interactions within the developing biofilms, resulting in a loss of vertically aligned polarized growing filaments (PubMed:31548684). Consequently, this hypoxia-typic morphotype (called H-MORPH) with altered biofilm architecture leads to increased hypoxia fitness, increased host inflammation, rapid disease progression, and mortality in a murine model of invasive aspergillosis (PubMed:31548684).</text>
</comment>
<comment type="induction">
    <text evidence="1">Expression is regulated by the hypoxia responsive morphology factor A (hrmA).</text>
</comment>
<evidence type="ECO:0000269" key="1">
    <source>
    </source>
</evidence>
<evidence type="ECO:0000303" key="2">
    <source>
    </source>
</evidence>
<keyword id="KW-0130">Cell adhesion</keyword>
<keyword id="KW-0843">Virulence</keyword>
<name>HAC4_ASPFC</name>
<sequence>MSGLKNSGKKAVDAILNPQKIDVAFQKFTRPTVAAGKTTFPTSQRDLKNIGFHFDLADHTRQVPDTRPNAKPGATRTANVFHWQAAAEAESKSIKDWIRKNGSHAVIQTLEVPVDATKEEFEDILKTAAKKL</sequence>
<feature type="chain" id="PRO_0000460422" description="Subtelomeric hrmA-associated cluster protein AFUB_079000">
    <location>
        <begin position="1"/>
        <end position="132"/>
    </location>
</feature>